<name>RS3_STRZT</name>
<organism>
    <name type="scientific">Streptococcus pneumoniae (strain Taiwan19F-14)</name>
    <dbReference type="NCBI Taxonomy" id="487213"/>
    <lineage>
        <taxon>Bacteria</taxon>
        <taxon>Bacillati</taxon>
        <taxon>Bacillota</taxon>
        <taxon>Bacilli</taxon>
        <taxon>Lactobacillales</taxon>
        <taxon>Streptococcaceae</taxon>
        <taxon>Streptococcus</taxon>
    </lineage>
</organism>
<protein>
    <recommendedName>
        <fullName evidence="1">Small ribosomal subunit protein uS3</fullName>
    </recommendedName>
    <alternativeName>
        <fullName evidence="2">30S ribosomal protein S3</fullName>
    </alternativeName>
</protein>
<accession>C1CP94</accession>
<dbReference type="EMBL" id="CP000921">
    <property type="protein sequence ID" value="ACO24117.1"/>
    <property type="molecule type" value="Genomic_DNA"/>
</dbReference>
<dbReference type="RefSeq" id="WP_000529936.1">
    <property type="nucleotide sequence ID" value="NC_012469.1"/>
</dbReference>
<dbReference type="SMR" id="C1CP94"/>
<dbReference type="GeneID" id="49600535"/>
<dbReference type="KEGG" id="snt:SPT_0262"/>
<dbReference type="HOGENOM" id="CLU_058591_0_2_9"/>
<dbReference type="GO" id="GO:0022627">
    <property type="term" value="C:cytosolic small ribosomal subunit"/>
    <property type="evidence" value="ECO:0007669"/>
    <property type="project" value="TreeGrafter"/>
</dbReference>
<dbReference type="GO" id="GO:0003729">
    <property type="term" value="F:mRNA binding"/>
    <property type="evidence" value="ECO:0007669"/>
    <property type="project" value="UniProtKB-UniRule"/>
</dbReference>
<dbReference type="GO" id="GO:0019843">
    <property type="term" value="F:rRNA binding"/>
    <property type="evidence" value="ECO:0007669"/>
    <property type="project" value="UniProtKB-UniRule"/>
</dbReference>
<dbReference type="GO" id="GO:0003735">
    <property type="term" value="F:structural constituent of ribosome"/>
    <property type="evidence" value="ECO:0007669"/>
    <property type="project" value="InterPro"/>
</dbReference>
<dbReference type="GO" id="GO:0006412">
    <property type="term" value="P:translation"/>
    <property type="evidence" value="ECO:0007669"/>
    <property type="project" value="UniProtKB-UniRule"/>
</dbReference>
<dbReference type="CDD" id="cd02412">
    <property type="entry name" value="KH-II_30S_S3"/>
    <property type="match status" value="1"/>
</dbReference>
<dbReference type="FunFam" id="3.30.1140.32:FF:000001">
    <property type="entry name" value="30S ribosomal protein S3"/>
    <property type="match status" value="1"/>
</dbReference>
<dbReference type="FunFam" id="3.30.300.20:FF:000001">
    <property type="entry name" value="30S ribosomal protein S3"/>
    <property type="match status" value="1"/>
</dbReference>
<dbReference type="Gene3D" id="3.30.300.20">
    <property type="match status" value="1"/>
</dbReference>
<dbReference type="Gene3D" id="3.30.1140.32">
    <property type="entry name" value="Ribosomal protein S3, C-terminal domain"/>
    <property type="match status" value="1"/>
</dbReference>
<dbReference type="HAMAP" id="MF_01309_B">
    <property type="entry name" value="Ribosomal_uS3_B"/>
    <property type="match status" value="1"/>
</dbReference>
<dbReference type="InterPro" id="IPR004087">
    <property type="entry name" value="KH_dom"/>
</dbReference>
<dbReference type="InterPro" id="IPR015946">
    <property type="entry name" value="KH_dom-like_a/b"/>
</dbReference>
<dbReference type="InterPro" id="IPR004044">
    <property type="entry name" value="KH_dom_type_2"/>
</dbReference>
<dbReference type="InterPro" id="IPR009019">
    <property type="entry name" value="KH_sf_prok-type"/>
</dbReference>
<dbReference type="InterPro" id="IPR036419">
    <property type="entry name" value="Ribosomal_S3_C_sf"/>
</dbReference>
<dbReference type="InterPro" id="IPR005704">
    <property type="entry name" value="Ribosomal_uS3_bac-typ"/>
</dbReference>
<dbReference type="InterPro" id="IPR001351">
    <property type="entry name" value="Ribosomal_uS3_C"/>
</dbReference>
<dbReference type="InterPro" id="IPR018280">
    <property type="entry name" value="Ribosomal_uS3_CS"/>
</dbReference>
<dbReference type="NCBIfam" id="TIGR01009">
    <property type="entry name" value="rpsC_bact"/>
    <property type="match status" value="1"/>
</dbReference>
<dbReference type="PANTHER" id="PTHR11760">
    <property type="entry name" value="30S/40S RIBOSOMAL PROTEIN S3"/>
    <property type="match status" value="1"/>
</dbReference>
<dbReference type="PANTHER" id="PTHR11760:SF19">
    <property type="entry name" value="SMALL RIBOSOMAL SUBUNIT PROTEIN US3C"/>
    <property type="match status" value="1"/>
</dbReference>
<dbReference type="Pfam" id="PF07650">
    <property type="entry name" value="KH_2"/>
    <property type="match status" value="1"/>
</dbReference>
<dbReference type="Pfam" id="PF00189">
    <property type="entry name" value="Ribosomal_S3_C"/>
    <property type="match status" value="1"/>
</dbReference>
<dbReference type="SMART" id="SM00322">
    <property type="entry name" value="KH"/>
    <property type="match status" value="1"/>
</dbReference>
<dbReference type="SUPFAM" id="SSF54814">
    <property type="entry name" value="Prokaryotic type KH domain (KH-domain type II)"/>
    <property type="match status" value="1"/>
</dbReference>
<dbReference type="SUPFAM" id="SSF54821">
    <property type="entry name" value="Ribosomal protein S3 C-terminal domain"/>
    <property type="match status" value="1"/>
</dbReference>
<dbReference type="PROSITE" id="PS50823">
    <property type="entry name" value="KH_TYPE_2"/>
    <property type="match status" value="1"/>
</dbReference>
<dbReference type="PROSITE" id="PS00548">
    <property type="entry name" value="RIBOSOMAL_S3"/>
    <property type="match status" value="1"/>
</dbReference>
<feature type="chain" id="PRO_1000165517" description="Small ribosomal subunit protein uS3">
    <location>
        <begin position="1"/>
        <end position="217"/>
    </location>
</feature>
<feature type="domain" description="KH type-2" evidence="1">
    <location>
        <begin position="38"/>
        <end position="106"/>
    </location>
</feature>
<evidence type="ECO:0000255" key="1">
    <source>
        <dbReference type="HAMAP-Rule" id="MF_01309"/>
    </source>
</evidence>
<evidence type="ECO:0000305" key="2"/>
<proteinExistence type="inferred from homology"/>
<comment type="function">
    <text evidence="1">Binds the lower part of the 30S subunit head. Binds mRNA in the 70S ribosome, positioning it for translation.</text>
</comment>
<comment type="subunit">
    <text evidence="1">Part of the 30S ribosomal subunit. Forms a tight complex with proteins S10 and S14.</text>
</comment>
<comment type="similarity">
    <text evidence="1">Belongs to the universal ribosomal protein uS3 family.</text>
</comment>
<keyword id="KW-0687">Ribonucleoprotein</keyword>
<keyword id="KW-0689">Ribosomal protein</keyword>
<keyword id="KW-0694">RNA-binding</keyword>
<keyword id="KW-0699">rRNA-binding</keyword>
<sequence>MGQKVHPIGMRVGIIRDWDAKWYAEKEYADYLHEDLAIRKFVQKELADAAVSTIEIERAVNKVNVSLHTAKPGMVIGKGGANVDALRAKLNKLTGKQVHINIIEIKQPDLDAHLVGEGIARQLEQRVAFRRAQKQAIQRAMRAGAKGIKTQVSGRLNGADIARAEGYSEGTVPLHTLRADIDYAWEEADTTYGKLGVKVWIYRGEVLPARKNTKGGK</sequence>
<reference key="1">
    <citation type="journal article" date="2010" name="Genome Biol.">
        <title>Structure and dynamics of the pan-genome of Streptococcus pneumoniae and closely related species.</title>
        <authorList>
            <person name="Donati C."/>
            <person name="Hiller N.L."/>
            <person name="Tettelin H."/>
            <person name="Muzzi A."/>
            <person name="Croucher N.J."/>
            <person name="Angiuoli S.V."/>
            <person name="Oggioni M."/>
            <person name="Dunning Hotopp J.C."/>
            <person name="Hu F.Z."/>
            <person name="Riley D.R."/>
            <person name="Covacci A."/>
            <person name="Mitchell T.J."/>
            <person name="Bentley S.D."/>
            <person name="Kilian M."/>
            <person name="Ehrlich G.D."/>
            <person name="Rappuoli R."/>
            <person name="Moxon E.R."/>
            <person name="Masignani V."/>
        </authorList>
    </citation>
    <scope>NUCLEOTIDE SEQUENCE [LARGE SCALE GENOMIC DNA]</scope>
    <source>
        <strain>Taiwan19F-14</strain>
    </source>
</reference>
<gene>
    <name evidence="1" type="primary">rpsC</name>
    <name type="ordered locus">SPT_0262</name>
</gene>